<evidence type="ECO:0000250" key="1"/>
<evidence type="ECO:0000255" key="2">
    <source>
        <dbReference type="HAMAP-Rule" id="MF_00223"/>
    </source>
</evidence>
<dbReference type="EC" id="3.5.4.16" evidence="2"/>
<dbReference type="EMBL" id="CP000538">
    <property type="protein sequence ID" value="EAQ73420.1"/>
    <property type="molecule type" value="Genomic_DNA"/>
</dbReference>
<dbReference type="RefSeq" id="WP_002854344.1">
    <property type="nucleotide sequence ID" value="NC_008787.1"/>
</dbReference>
<dbReference type="SMR" id="A1VXS2"/>
<dbReference type="KEGG" id="cjj:CJJ81176_0225"/>
<dbReference type="eggNOG" id="COG0302">
    <property type="taxonomic scope" value="Bacteria"/>
</dbReference>
<dbReference type="HOGENOM" id="CLU_049768_3_1_7"/>
<dbReference type="UniPathway" id="UPA00848">
    <property type="reaction ID" value="UER00151"/>
</dbReference>
<dbReference type="Proteomes" id="UP000000646">
    <property type="component" value="Chromosome"/>
</dbReference>
<dbReference type="GO" id="GO:0005737">
    <property type="term" value="C:cytoplasm"/>
    <property type="evidence" value="ECO:0007669"/>
    <property type="project" value="TreeGrafter"/>
</dbReference>
<dbReference type="GO" id="GO:0005525">
    <property type="term" value="F:GTP binding"/>
    <property type="evidence" value="ECO:0007669"/>
    <property type="project" value="UniProtKB-KW"/>
</dbReference>
<dbReference type="GO" id="GO:0003934">
    <property type="term" value="F:GTP cyclohydrolase I activity"/>
    <property type="evidence" value="ECO:0007669"/>
    <property type="project" value="UniProtKB-UniRule"/>
</dbReference>
<dbReference type="GO" id="GO:0008270">
    <property type="term" value="F:zinc ion binding"/>
    <property type="evidence" value="ECO:0007669"/>
    <property type="project" value="UniProtKB-UniRule"/>
</dbReference>
<dbReference type="GO" id="GO:0006730">
    <property type="term" value="P:one-carbon metabolic process"/>
    <property type="evidence" value="ECO:0007669"/>
    <property type="project" value="UniProtKB-UniRule"/>
</dbReference>
<dbReference type="GO" id="GO:0006729">
    <property type="term" value="P:tetrahydrobiopterin biosynthetic process"/>
    <property type="evidence" value="ECO:0007669"/>
    <property type="project" value="TreeGrafter"/>
</dbReference>
<dbReference type="GO" id="GO:0046654">
    <property type="term" value="P:tetrahydrofolate biosynthetic process"/>
    <property type="evidence" value="ECO:0007669"/>
    <property type="project" value="UniProtKB-UniRule"/>
</dbReference>
<dbReference type="CDD" id="cd00642">
    <property type="entry name" value="GTP_cyclohydro1"/>
    <property type="match status" value="1"/>
</dbReference>
<dbReference type="FunFam" id="3.30.1130.10:FF:000001">
    <property type="entry name" value="GTP cyclohydrolase 1"/>
    <property type="match status" value="1"/>
</dbReference>
<dbReference type="Gene3D" id="1.10.286.10">
    <property type="match status" value="1"/>
</dbReference>
<dbReference type="Gene3D" id="3.30.1130.10">
    <property type="match status" value="1"/>
</dbReference>
<dbReference type="HAMAP" id="MF_00223">
    <property type="entry name" value="FolE"/>
    <property type="match status" value="1"/>
</dbReference>
<dbReference type="InterPro" id="IPR043133">
    <property type="entry name" value="GTP-CH-I_C/QueF"/>
</dbReference>
<dbReference type="InterPro" id="IPR043134">
    <property type="entry name" value="GTP-CH-I_N"/>
</dbReference>
<dbReference type="InterPro" id="IPR001474">
    <property type="entry name" value="GTP_CycHdrlase_I"/>
</dbReference>
<dbReference type="InterPro" id="IPR018234">
    <property type="entry name" value="GTP_CycHdrlase_I_CS"/>
</dbReference>
<dbReference type="InterPro" id="IPR020602">
    <property type="entry name" value="GTP_CycHdrlase_I_dom"/>
</dbReference>
<dbReference type="NCBIfam" id="TIGR00063">
    <property type="entry name" value="folE"/>
    <property type="match status" value="1"/>
</dbReference>
<dbReference type="NCBIfam" id="NF006825">
    <property type="entry name" value="PRK09347.1-2"/>
    <property type="match status" value="1"/>
</dbReference>
<dbReference type="NCBIfam" id="NF006826">
    <property type="entry name" value="PRK09347.1-3"/>
    <property type="match status" value="1"/>
</dbReference>
<dbReference type="PANTHER" id="PTHR11109:SF7">
    <property type="entry name" value="GTP CYCLOHYDROLASE 1"/>
    <property type="match status" value="1"/>
</dbReference>
<dbReference type="PANTHER" id="PTHR11109">
    <property type="entry name" value="GTP CYCLOHYDROLASE I"/>
    <property type="match status" value="1"/>
</dbReference>
<dbReference type="Pfam" id="PF01227">
    <property type="entry name" value="GTP_cyclohydroI"/>
    <property type="match status" value="1"/>
</dbReference>
<dbReference type="SUPFAM" id="SSF55620">
    <property type="entry name" value="Tetrahydrobiopterin biosynthesis enzymes-like"/>
    <property type="match status" value="1"/>
</dbReference>
<dbReference type="PROSITE" id="PS00859">
    <property type="entry name" value="GTP_CYCLOHYDROL_1_1"/>
    <property type="match status" value="1"/>
</dbReference>
<keyword id="KW-0342">GTP-binding</keyword>
<keyword id="KW-0378">Hydrolase</keyword>
<keyword id="KW-0479">Metal-binding</keyword>
<keyword id="KW-0547">Nucleotide-binding</keyword>
<keyword id="KW-0554">One-carbon metabolism</keyword>
<keyword id="KW-0862">Zinc</keyword>
<organism>
    <name type="scientific">Campylobacter jejuni subsp. jejuni serotype O:23/36 (strain 81-176)</name>
    <dbReference type="NCBI Taxonomy" id="354242"/>
    <lineage>
        <taxon>Bacteria</taxon>
        <taxon>Pseudomonadati</taxon>
        <taxon>Campylobacterota</taxon>
        <taxon>Epsilonproteobacteria</taxon>
        <taxon>Campylobacterales</taxon>
        <taxon>Campylobacteraceae</taxon>
        <taxon>Campylobacter</taxon>
    </lineage>
</organism>
<feature type="chain" id="PRO_1000043673" description="GTP cyclohydrolase 1">
    <location>
        <begin position="1"/>
        <end position="190"/>
    </location>
</feature>
<feature type="binding site" evidence="2">
    <location>
        <position position="75"/>
    </location>
    <ligand>
        <name>Zn(2+)</name>
        <dbReference type="ChEBI" id="CHEBI:29105"/>
    </ligand>
</feature>
<feature type="binding site" evidence="2">
    <location>
        <position position="78"/>
    </location>
    <ligand>
        <name>Zn(2+)</name>
        <dbReference type="ChEBI" id="CHEBI:29105"/>
    </ligand>
</feature>
<feature type="binding site" evidence="2">
    <location>
        <position position="146"/>
    </location>
    <ligand>
        <name>Zn(2+)</name>
        <dbReference type="ChEBI" id="CHEBI:29105"/>
    </ligand>
</feature>
<reference key="1">
    <citation type="submission" date="2006-12" db="EMBL/GenBank/DDBJ databases">
        <authorList>
            <person name="Fouts D.E."/>
            <person name="Nelson K.E."/>
            <person name="Sebastian Y."/>
        </authorList>
    </citation>
    <scope>NUCLEOTIDE SEQUENCE [LARGE SCALE GENOMIC DNA]</scope>
    <source>
        <strain>81-176</strain>
    </source>
</reference>
<gene>
    <name evidence="2" type="primary">folE</name>
    <name type="ordered locus">CJJ81176_0225</name>
</gene>
<accession>A1VXS2</accession>
<protein>
    <recommendedName>
        <fullName evidence="2">GTP cyclohydrolase 1</fullName>
        <ecNumber evidence="2">3.5.4.16</ecNumber>
    </recommendedName>
    <alternativeName>
        <fullName evidence="2">GTP cyclohydrolase I</fullName>
        <shortName evidence="2">GTP-CH-I</shortName>
    </alternativeName>
</protein>
<name>GCH1_CAMJJ</name>
<comment type="catalytic activity">
    <reaction evidence="2">
        <text>GTP + H2O = 7,8-dihydroneopterin 3'-triphosphate + formate + H(+)</text>
        <dbReference type="Rhea" id="RHEA:17473"/>
        <dbReference type="ChEBI" id="CHEBI:15377"/>
        <dbReference type="ChEBI" id="CHEBI:15378"/>
        <dbReference type="ChEBI" id="CHEBI:15740"/>
        <dbReference type="ChEBI" id="CHEBI:37565"/>
        <dbReference type="ChEBI" id="CHEBI:58462"/>
        <dbReference type="EC" id="3.5.4.16"/>
    </reaction>
</comment>
<comment type="pathway">
    <text evidence="2">Cofactor biosynthesis; 7,8-dihydroneopterin triphosphate biosynthesis; 7,8-dihydroneopterin triphosphate from GTP: step 1/1.</text>
</comment>
<comment type="subunit">
    <text evidence="1">Toroid-shaped homodecamer, composed of two pentamers of five dimers.</text>
</comment>
<comment type="similarity">
    <text evidence="2">Belongs to the GTP cyclohydrolase I family.</text>
</comment>
<sequence length="190" mass="21830">MQKKFEDCVKTMLEIIGENPNREGLIKTPNRVFKTYEFLTSGYTQNVKEILNDALFESSNNEMVLVRDIEFYSLCEHHLLPFFGRAHVAYIPNKKVVGLSKIPRLVEVFARRLQIQEQLTEQIAQALMENVDAKGVGVVIEARHMCVEMRGVQKANSTTTTSALRGIFLKNEKTREEFFSLINSAKQVRF</sequence>
<proteinExistence type="inferred from homology"/>